<feature type="chain" id="PRO_0000299224" description="Protein alpha-3">
    <location>
        <begin position="1"/>
        <end position="51"/>
    </location>
</feature>
<organismHost>
    <name type="scientific">Bos taurus</name>
    <name type="common">Bovine</name>
    <dbReference type="NCBI Taxonomy" id="9913"/>
</organismHost>
<organismHost>
    <name type="scientific">Bubalus bubalis</name>
    <name type="common">Domestic water buffalo</name>
    <dbReference type="NCBI Taxonomy" id="89462"/>
</organismHost>
<organismHost>
    <name type="scientific">Culicoides</name>
    <dbReference type="NCBI Taxonomy" id="58271"/>
</organismHost>
<organismHost>
    <name type="scientific">Syncerus caffer</name>
    <name type="common">African buffalo</name>
    <dbReference type="NCBI Taxonomy" id="9970"/>
</organismHost>
<accession>Q65477</accession>
<protein>
    <recommendedName>
        <fullName>Protein alpha-3</fullName>
    </recommendedName>
</protein>
<organism>
    <name type="scientific">Bovine ephemeral fever virus (strain BB7721)</name>
    <name type="common">BEFV</name>
    <dbReference type="NCBI Taxonomy" id="928297"/>
    <lineage>
        <taxon>Viruses</taxon>
        <taxon>Riboviria</taxon>
        <taxon>Orthornavirae</taxon>
        <taxon>Negarnaviricota</taxon>
        <taxon>Haploviricotina</taxon>
        <taxon>Monjiviricetes</taxon>
        <taxon>Mononegavirales</taxon>
        <taxon>Rhabdoviridae</taxon>
        <taxon>Alpharhabdovirinae</taxon>
        <taxon>Ephemerovirus</taxon>
        <taxon>Ephemerovirus febris</taxon>
    </lineage>
</organism>
<gene>
    <name type="primary">alpha</name>
</gene>
<name>VPA3_BEFVB</name>
<sequence length="51" mass="5723">MEIDGRRFAHLDEGRKTGHNVKGGGKFRLLPMAQHQRELVVSGGHEKTNIN</sequence>
<reference key="1">
    <citation type="journal article" date="1997" name="J. Gen. Virol.">
        <title>Genome organization and transcription strategy in the complex GNS-L intergenic region of bovine ephemeral fever rhabdovirus.</title>
        <authorList>
            <person name="McWilliam S.M."/>
            <person name="Kongsuwan K."/>
            <person name="Cowley J.A."/>
            <person name="Byrne K.A."/>
            <person name="Walker P.J."/>
        </authorList>
    </citation>
    <scope>NUCLEOTIDE SEQUENCE [GENOMIC RNA]</scope>
</reference>
<dbReference type="EMBL" id="U18106">
    <property type="protein sequence ID" value="AAB63050.1"/>
    <property type="molecule type" value="Genomic_RNA"/>
</dbReference>
<dbReference type="EMBL" id="AF234533">
    <property type="protein sequence ID" value="AAG10417.1"/>
    <property type="molecule type" value="Genomic_DNA"/>
</dbReference>
<dbReference type="RefSeq" id="NP_065406.1">
    <property type="nucleotide sequence ID" value="NC_002526.1"/>
</dbReference>
<dbReference type="GeneID" id="911731"/>
<dbReference type="Proteomes" id="UP000008588">
    <property type="component" value="Segment"/>
</dbReference>
<keyword id="KW-1185">Reference proteome</keyword>
<proteinExistence type="predicted"/>